<dbReference type="EMBL" id="AF192466">
    <property type="protein sequence ID" value="AAF18437.1"/>
    <property type="molecule type" value="mRNA"/>
</dbReference>
<dbReference type="EMBL" id="AF123249">
    <property type="protein sequence ID" value="AAG43237.1"/>
    <property type="molecule type" value="mRNA"/>
</dbReference>
<dbReference type="EMBL" id="AK290231">
    <property type="protein sequence ID" value="BAF82920.1"/>
    <property type="molecule type" value="mRNA"/>
</dbReference>
<dbReference type="EMBL" id="AK312663">
    <property type="protein sequence ID" value="BAG35545.1"/>
    <property type="molecule type" value="mRNA"/>
</dbReference>
<dbReference type="EMBL" id="AP002364">
    <property type="status" value="NOT_ANNOTATED_CDS"/>
    <property type="molecule type" value="Genomic_DNA"/>
</dbReference>
<dbReference type="EMBL" id="CH471065">
    <property type="protein sequence ID" value="EAW66868.1"/>
    <property type="molecule type" value="Genomic_DNA"/>
</dbReference>
<dbReference type="EMBL" id="CH471065">
    <property type="protein sequence ID" value="EAW66870.1"/>
    <property type="molecule type" value="Genomic_DNA"/>
</dbReference>
<dbReference type="EMBL" id="BC017789">
    <property type="protein sequence ID" value="AAH17789.1"/>
    <property type="status" value="ALT_INIT"/>
    <property type="molecule type" value="mRNA"/>
</dbReference>
<dbReference type="EMBL" id="BC072461">
    <property type="protein sequence ID" value="AAH72461.1"/>
    <property type="molecule type" value="mRNA"/>
</dbReference>
<dbReference type="CCDS" id="CCDS44705.1">
    <molecule id="Q9UHD1-2"/>
</dbReference>
<dbReference type="CCDS" id="CCDS8289.1">
    <molecule id="Q9UHD1-1"/>
</dbReference>
<dbReference type="RefSeq" id="NP_001137545.1">
    <molecule id="Q9UHD1-2"/>
    <property type="nucleotide sequence ID" value="NM_001144073.2"/>
</dbReference>
<dbReference type="RefSeq" id="NP_036256.2">
    <molecule id="Q9UHD1-1"/>
    <property type="nucleotide sequence ID" value="NM_012124.3"/>
</dbReference>
<dbReference type="PDB" id="2YRT">
    <property type="method" value="NMR"/>
    <property type="chains" value="A=1-68"/>
</dbReference>
<dbReference type="PDBsum" id="2YRT"/>
<dbReference type="SMR" id="Q9UHD1"/>
<dbReference type="BioGRID" id="117929">
    <property type="interactions" value="130"/>
</dbReference>
<dbReference type="FunCoup" id="Q9UHD1">
    <property type="interactions" value="982"/>
</dbReference>
<dbReference type="IntAct" id="Q9UHD1">
    <property type="interactions" value="80"/>
</dbReference>
<dbReference type="MINT" id="Q9UHD1"/>
<dbReference type="STRING" id="9606.ENSP00000319255"/>
<dbReference type="GlyGen" id="Q9UHD1">
    <property type="glycosylation" value="1 site, 1 O-linked glycan (1 site)"/>
</dbReference>
<dbReference type="iPTMnet" id="Q9UHD1"/>
<dbReference type="MetOSite" id="Q9UHD1"/>
<dbReference type="PhosphoSitePlus" id="Q9UHD1"/>
<dbReference type="SwissPalm" id="Q9UHD1"/>
<dbReference type="BioMuta" id="CHORDC1"/>
<dbReference type="DMDM" id="167008724"/>
<dbReference type="jPOST" id="Q9UHD1"/>
<dbReference type="MassIVE" id="Q9UHD1"/>
<dbReference type="PaxDb" id="9606-ENSP00000319255"/>
<dbReference type="PeptideAtlas" id="Q9UHD1"/>
<dbReference type="ProteomicsDB" id="84321">
    <molecule id="Q9UHD1-1"/>
</dbReference>
<dbReference type="ProteomicsDB" id="84322">
    <molecule id="Q9UHD1-2"/>
</dbReference>
<dbReference type="Pumba" id="Q9UHD1"/>
<dbReference type="Antibodypedia" id="31553">
    <property type="antibodies" value="203 antibodies from 29 providers"/>
</dbReference>
<dbReference type="DNASU" id="26973"/>
<dbReference type="Ensembl" id="ENST00000320585.11">
    <molecule id="Q9UHD1-1"/>
    <property type="protein sequence ID" value="ENSP00000319255.6"/>
    <property type="gene ID" value="ENSG00000110172.12"/>
</dbReference>
<dbReference type="Ensembl" id="ENST00000457199.6">
    <molecule id="Q9UHD1-2"/>
    <property type="protein sequence ID" value="ENSP00000401080.2"/>
    <property type="gene ID" value="ENSG00000110172.12"/>
</dbReference>
<dbReference type="Ensembl" id="ENST00000646618.2">
    <molecule id="Q9UHD1-1"/>
    <property type="protein sequence ID" value="ENSP00000496744.1"/>
    <property type="gene ID" value="ENSG00000285023.2"/>
</dbReference>
<dbReference type="Ensembl" id="ENST00000647220.1">
    <molecule id="Q9UHD1-2"/>
    <property type="protein sequence ID" value="ENSP00000494044.1"/>
    <property type="gene ID" value="ENSG00000285023.2"/>
</dbReference>
<dbReference type="GeneID" id="26973"/>
<dbReference type="KEGG" id="hsa:26973"/>
<dbReference type="MANE-Select" id="ENST00000320585.11">
    <property type="protein sequence ID" value="ENSP00000319255.6"/>
    <property type="RefSeq nucleotide sequence ID" value="NM_012124.3"/>
    <property type="RefSeq protein sequence ID" value="NP_036256.2"/>
</dbReference>
<dbReference type="UCSC" id="uc001pdg.4">
    <molecule id="Q9UHD1-1"/>
    <property type="organism name" value="human"/>
</dbReference>
<dbReference type="AGR" id="HGNC:14525"/>
<dbReference type="CTD" id="26973"/>
<dbReference type="DisGeNET" id="26973"/>
<dbReference type="GeneCards" id="CHORDC1"/>
<dbReference type="HGNC" id="HGNC:14525">
    <property type="gene designation" value="CHORDC1"/>
</dbReference>
<dbReference type="HPA" id="ENSG00000110172">
    <property type="expression patterns" value="Low tissue specificity"/>
</dbReference>
<dbReference type="MIM" id="604353">
    <property type="type" value="gene"/>
</dbReference>
<dbReference type="neXtProt" id="NX_Q9UHD1"/>
<dbReference type="OpenTargets" id="ENSG00000110172"/>
<dbReference type="PharmGKB" id="PA26476"/>
<dbReference type="VEuPathDB" id="HostDB:ENSG00000110172"/>
<dbReference type="eggNOG" id="KOG1667">
    <property type="taxonomic scope" value="Eukaryota"/>
</dbReference>
<dbReference type="GeneTree" id="ENSGT00940000154174"/>
<dbReference type="HOGENOM" id="CLU_040079_0_0_1"/>
<dbReference type="InParanoid" id="Q9UHD1"/>
<dbReference type="OMA" id="KGYTCCK"/>
<dbReference type="OrthoDB" id="10261079at2759"/>
<dbReference type="PAN-GO" id="Q9UHD1">
    <property type="GO annotations" value="2 GO annotations based on evolutionary models"/>
</dbReference>
<dbReference type="PhylomeDB" id="Q9UHD1"/>
<dbReference type="TreeFam" id="TF105394"/>
<dbReference type="PathwayCommons" id="Q9UHD1"/>
<dbReference type="SignaLink" id="Q9UHD1"/>
<dbReference type="BioGRID-ORCS" id="26973">
    <property type="hits" value="560 hits in 1171 CRISPR screens"/>
</dbReference>
<dbReference type="CD-CODE" id="DEE660B4">
    <property type="entry name" value="Stress granule"/>
</dbReference>
<dbReference type="ChiTaRS" id="CHORDC1">
    <property type="organism name" value="human"/>
</dbReference>
<dbReference type="EvolutionaryTrace" id="Q9UHD1"/>
<dbReference type="GenomeRNAi" id="26973"/>
<dbReference type="Pharos" id="Q9UHD1">
    <property type="development level" value="Tbio"/>
</dbReference>
<dbReference type="PRO" id="PR:Q9UHD1"/>
<dbReference type="Proteomes" id="UP000005640">
    <property type="component" value="Chromosome 11"/>
</dbReference>
<dbReference type="RNAct" id="Q9UHD1">
    <property type="molecule type" value="protein"/>
</dbReference>
<dbReference type="Bgee" id="ENSG00000110172">
    <property type="expression patterns" value="Expressed in corpus callosum and 104 other cell types or tissues"/>
</dbReference>
<dbReference type="ExpressionAtlas" id="Q9UHD1">
    <property type="expression patterns" value="baseline and differential"/>
</dbReference>
<dbReference type="GO" id="GO:0043531">
    <property type="term" value="F:ADP binding"/>
    <property type="evidence" value="ECO:0007669"/>
    <property type="project" value="Ensembl"/>
</dbReference>
<dbReference type="GO" id="GO:0005524">
    <property type="term" value="F:ATP binding"/>
    <property type="evidence" value="ECO:0007669"/>
    <property type="project" value="Ensembl"/>
</dbReference>
<dbReference type="GO" id="GO:0051879">
    <property type="term" value="F:Hsp90 protein binding"/>
    <property type="evidence" value="ECO:0000353"/>
    <property type="project" value="UniProtKB"/>
</dbReference>
<dbReference type="GO" id="GO:0008270">
    <property type="term" value="F:zinc ion binding"/>
    <property type="evidence" value="ECO:0000318"/>
    <property type="project" value="GO_Central"/>
</dbReference>
<dbReference type="GO" id="GO:0051298">
    <property type="term" value="P:centrosome duplication"/>
    <property type="evidence" value="ECO:0000318"/>
    <property type="project" value="GO_Central"/>
</dbReference>
<dbReference type="GO" id="GO:0061077">
    <property type="term" value="P:chaperone-mediated protein folding"/>
    <property type="evidence" value="ECO:0000250"/>
    <property type="project" value="UniProtKB"/>
</dbReference>
<dbReference type="GO" id="GO:1900034">
    <property type="term" value="P:regulation of cellular response to heat"/>
    <property type="evidence" value="ECO:0000250"/>
    <property type="project" value="UniProtKB"/>
</dbReference>
<dbReference type="GO" id="GO:0010824">
    <property type="term" value="P:regulation of centrosome duplication"/>
    <property type="evidence" value="ECO:0007669"/>
    <property type="project" value="Ensembl"/>
</dbReference>
<dbReference type="CDD" id="cd06488">
    <property type="entry name" value="p23_melusin_like"/>
    <property type="match status" value="1"/>
</dbReference>
<dbReference type="FunFam" id="2.60.40.790:FF:000017">
    <property type="entry name" value="Cysteine and histidine-rich domain-containing protein 1"/>
    <property type="match status" value="1"/>
</dbReference>
<dbReference type="FunFam" id="4.10.1130.20:FF:000001">
    <property type="entry name" value="Cysteine and histidine-rich domain-containing protein 1"/>
    <property type="match status" value="1"/>
</dbReference>
<dbReference type="FunFam" id="4.10.1130.20:FF:000002">
    <property type="entry name" value="cysteine and histidine-rich domain-containing protein 1"/>
    <property type="match status" value="1"/>
</dbReference>
<dbReference type="Gene3D" id="2.60.40.790">
    <property type="match status" value="1"/>
</dbReference>
<dbReference type="Gene3D" id="4.10.1130.20">
    <property type="match status" value="2"/>
</dbReference>
<dbReference type="InterPro" id="IPR007051">
    <property type="entry name" value="CHORD_dom"/>
</dbReference>
<dbReference type="InterPro" id="IPR039790">
    <property type="entry name" value="CHRD1"/>
</dbReference>
<dbReference type="InterPro" id="IPR007052">
    <property type="entry name" value="CS_dom"/>
</dbReference>
<dbReference type="InterPro" id="IPR008978">
    <property type="entry name" value="HSP20-like_chaperone"/>
</dbReference>
<dbReference type="PANTHER" id="PTHR46983">
    <property type="entry name" value="CYSTEINE AND HISTIDINE-RICH DOMAIN-CONTAINING PROTEIN 1"/>
    <property type="match status" value="1"/>
</dbReference>
<dbReference type="PANTHER" id="PTHR46983:SF4">
    <property type="entry name" value="CYSTEINE AND HISTIDINE-RICH DOMAIN-CONTAINING PROTEIN 1"/>
    <property type="match status" value="1"/>
</dbReference>
<dbReference type="Pfam" id="PF04968">
    <property type="entry name" value="CHORD"/>
    <property type="match status" value="2"/>
</dbReference>
<dbReference type="Pfam" id="PF04969">
    <property type="entry name" value="CS"/>
    <property type="match status" value="1"/>
</dbReference>
<dbReference type="SUPFAM" id="SSF49764">
    <property type="entry name" value="HSP20-like chaperones"/>
    <property type="match status" value="1"/>
</dbReference>
<dbReference type="PROSITE" id="PS51401">
    <property type="entry name" value="CHORD"/>
    <property type="match status" value="2"/>
</dbReference>
<dbReference type="PROSITE" id="PS51203">
    <property type="entry name" value="CS"/>
    <property type="match status" value="1"/>
</dbReference>
<proteinExistence type="evidence at protein level"/>
<evidence type="ECO:0000250" key="1"/>
<evidence type="ECO:0000255" key="2">
    <source>
        <dbReference type="PROSITE-ProRule" id="PRU00547"/>
    </source>
</evidence>
<evidence type="ECO:0000255" key="3">
    <source>
        <dbReference type="PROSITE-ProRule" id="PRU00734"/>
    </source>
</evidence>
<evidence type="ECO:0000269" key="4">
    <source>
    </source>
</evidence>
<evidence type="ECO:0000269" key="5">
    <source>
    </source>
</evidence>
<evidence type="ECO:0000269" key="6">
    <source>
    </source>
</evidence>
<evidence type="ECO:0000269" key="7">
    <source>
    </source>
</evidence>
<evidence type="ECO:0000269" key="8">
    <source ref="18"/>
</evidence>
<evidence type="ECO:0000269" key="9">
    <source ref="2"/>
</evidence>
<evidence type="ECO:0000269" key="10">
    <source ref="5"/>
</evidence>
<evidence type="ECO:0000269" key="11">
    <source ref="7"/>
</evidence>
<evidence type="ECO:0000303" key="12">
    <source ref="2"/>
</evidence>
<evidence type="ECO:0000305" key="13"/>
<evidence type="ECO:0007744" key="14">
    <source>
        <dbReference type="PDB" id="2YRT"/>
    </source>
</evidence>
<evidence type="ECO:0007744" key="15">
    <source>
    </source>
</evidence>
<evidence type="ECO:0007744" key="16">
    <source>
    </source>
</evidence>
<evidence type="ECO:0007829" key="17">
    <source>
        <dbReference type="PDB" id="2YRT"/>
    </source>
</evidence>
<feature type="initiator methionine" description="Removed" evidence="11 16">
    <location>
        <position position="1"/>
    </location>
</feature>
<feature type="chain" id="PRO_0000317770" description="Cysteine and histidine-rich domain-containing protein 1">
    <location>
        <begin position="2"/>
        <end position="332"/>
    </location>
</feature>
<feature type="domain" description="CHORD 1" evidence="3">
    <location>
        <begin position="5"/>
        <end position="64"/>
    </location>
</feature>
<feature type="domain" description="CHORD 2" evidence="3">
    <location>
        <begin position="157"/>
        <end position="216"/>
    </location>
</feature>
<feature type="domain" description="CS" evidence="2">
    <location>
        <begin position="227"/>
        <end position="316"/>
    </location>
</feature>
<feature type="region of interest" description="Interaction with PPP5C" evidence="1">
    <location>
        <begin position="2"/>
        <end position="77"/>
    </location>
</feature>
<feature type="region of interest" description="Interaction with HSP90AA1 and HSP90AB1" evidence="1">
    <location>
        <begin position="65"/>
        <end position="316"/>
    </location>
</feature>
<feature type="binding site" evidence="8 14">
    <location>
        <position position="5"/>
    </location>
    <ligand>
        <name>Zn(2+)</name>
        <dbReference type="ChEBI" id="CHEBI:29105"/>
        <label>1</label>
    </ligand>
</feature>
<feature type="binding site" evidence="8 14">
    <location>
        <position position="10"/>
    </location>
    <ligand>
        <name>Zn(2+)</name>
        <dbReference type="ChEBI" id="CHEBI:29105"/>
        <label>1</label>
    </ligand>
</feature>
<feature type="binding site" evidence="8 14">
    <location>
        <position position="24"/>
    </location>
    <ligand>
        <name>Zn(2+)</name>
        <dbReference type="ChEBI" id="CHEBI:29105"/>
        <label>1</label>
    </ligand>
</feature>
<feature type="binding site" evidence="8 14">
    <location>
        <position position="27"/>
    </location>
    <ligand>
        <name>Zn(2+)</name>
        <dbReference type="ChEBI" id="CHEBI:29105"/>
        <label>2</label>
    </ligand>
</feature>
<feature type="binding site" evidence="8 14">
    <location>
        <position position="42"/>
    </location>
    <ligand>
        <name>Zn(2+)</name>
        <dbReference type="ChEBI" id="CHEBI:29105"/>
        <label>2</label>
    </ligand>
</feature>
<feature type="binding site" evidence="8 14">
    <location>
        <position position="43"/>
    </location>
    <ligand>
        <name>Zn(2+)</name>
        <dbReference type="ChEBI" id="CHEBI:29105"/>
        <label>2</label>
    </ligand>
</feature>
<feature type="binding site" evidence="8 14">
    <location>
        <position position="59"/>
    </location>
    <ligand>
        <name>Zn(2+)</name>
        <dbReference type="ChEBI" id="CHEBI:29105"/>
        <label>2</label>
    </ligand>
</feature>
<feature type="binding site" evidence="8 14">
    <location>
        <position position="64"/>
    </location>
    <ligand>
        <name>Zn(2+)</name>
        <dbReference type="ChEBI" id="CHEBI:29105"/>
        <label>1</label>
    </ligand>
</feature>
<feature type="binding site" evidence="3">
    <location>
        <position position="157"/>
    </location>
    <ligand>
        <name>Zn(2+)</name>
        <dbReference type="ChEBI" id="CHEBI:29105"/>
        <label>3</label>
    </ligand>
</feature>
<feature type="binding site" evidence="3">
    <location>
        <position position="162"/>
    </location>
    <ligand>
        <name>Zn(2+)</name>
        <dbReference type="ChEBI" id="CHEBI:29105"/>
        <label>3</label>
    </ligand>
</feature>
<feature type="binding site" evidence="3">
    <location>
        <position position="176"/>
    </location>
    <ligand>
        <name>Zn(2+)</name>
        <dbReference type="ChEBI" id="CHEBI:29105"/>
        <label>3</label>
    </ligand>
</feature>
<feature type="binding site" evidence="3">
    <location>
        <position position="179"/>
    </location>
    <ligand>
        <name>Zn(2+)</name>
        <dbReference type="ChEBI" id="CHEBI:29105"/>
        <label>4</label>
    </ligand>
</feature>
<feature type="binding site" evidence="3">
    <location>
        <position position="194"/>
    </location>
    <ligand>
        <name>Zn(2+)</name>
        <dbReference type="ChEBI" id="CHEBI:29105"/>
        <label>4</label>
    </ligand>
</feature>
<feature type="binding site" evidence="3">
    <location>
        <position position="195"/>
    </location>
    <ligand>
        <name>Zn(2+)</name>
        <dbReference type="ChEBI" id="CHEBI:29105"/>
        <label>4</label>
    </ligand>
</feature>
<feature type="binding site" evidence="3">
    <location>
        <position position="211"/>
    </location>
    <ligand>
        <name>Zn(2+)</name>
        <dbReference type="ChEBI" id="CHEBI:29105"/>
        <label>4</label>
    </ligand>
</feature>
<feature type="binding site" evidence="3">
    <location>
        <position position="216"/>
    </location>
    <ligand>
        <name>Zn(2+)</name>
        <dbReference type="ChEBI" id="CHEBI:29105"/>
        <label>3</label>
    </ligand>
</feature>
<feature type="modified residue" description="N-acetylalanine" evidence="11 16">
    <location>
        <position position="2"/>
    </location>
</feature>
<feature type="modified residue" description="Phosphothreonine" evidence="15">
    <location>
        <position position="47"/>
    </location>
</feature>
<feature type="modified residue" description="Phosphoserine" evidence="15">
    <location>
        <position position="51"/>
    </location>
</feature>
<feature type="splice variant" id="VSP_031150" description="In isoform 2." evidence="12">
    <location>
        <begin position="39"/>
        <end position="57"/>
    </location>
</feature>
<feature type="sequence variant" id="VAR_038676" description="In dbSNP:rs1045861." evidence="4 5 9 10">
    <original>A</original>
    <variation>D</variation>
    <location>
        <position position="329"/>
    </location>
</feature>
<feature type="sequence conflict" description="In Ref. 1; AAF18437." evidence="13" ref="1">
    <original>W</original>
    <variation>L</variation>
    <location>
        <position position="234"/>
    </location>
</feature>
<feature type="sequence conflict" description="In Ref. 1; AAF18437." evidence="13" ref="1">
    <original>H</original>
    <variation>I</variation>
    <location>
        <position position="267"/>
    </location>
</feature>
<feature type="turn" evidence="17">
    <location>
        <begin position="8"/>
        <end position="10"/>
    </location>
</feature>
<feature type="turn" evidence="17">
    <location>
        <begin position="16"/>
        <end position="18"/>
    </location>
</feature>
<feature type="turn" evidence="17">
    <location>
        <begin position="21"/>
        <end position="23"/>
    </location>
</feature>
<feature type="strand" evidence="17">
    <location>
        <begin position="31"/>
        <end position="34"/>
    </location>
</feature>
<feature type="strand" evidence="17">
    <location>
        <begin position="37"/>
        <end position="44"/>
    </location>
</feature>
<feature type="strand" evidence="17">
    <location>
        <begin position="46"/>
        <end position="49"/>
    </location>
</feature>
<feature type="helix" evidence="17">
    <location>
        <begin position="50"/>
        <end position="53"/>
    </location>
</feature>
<name>CHRD1_HUMAN</name>
<keyword id="KW-0002">3D-structure</keyword>
<keyword id="KW-0007">Acetylation</keyword>
<keyword id="KW-0025">Alternative splicing</keyword>
<keyword id="KW-0143">Chaperone</keyword>
<keyword id="KW-0903">Direct protein sequencing</keyword>
<keyword id="KW-0479">Metal-binding</keyword>
<keyword id="KW-0597">Phosphoprotein</keyword>
<keyword id="KW-1267">Proteomics identification</keyword>
<keyword id="KW-1185">Reference proteome</keyword>
<keyword id="KW-0677">Repeat</keyword>
<keyword id="KW-0346">Stress response</keyword>
<keyword id="KW-0862">Zinc</keyword>
<accession>Q9UHD1</accession>
<accession>B2R6P8</accession>
<accession>Q6IN49</accession>
<accession>Q8WVL9</accession>
<accession>Q9H3D6</accession>
<gene>
    <name type="primary">CHORDC1</name>
    <name type="synonym">CHP1</name>
</gene>
<reference key="1">
    <citation type="journal article" date="1999" name="Cell">
        <title>A novel class of eukaryotic zinc-binding proteins is required for disease resistance signaling in barley and development in C. elegans.</title>
        <authorList>
            <person name="Shirasu K."/>
            <person name="Lahaye T."/>
            <person name="Tan M.-W."/>
            <person name="Zhou F."/>
            <person name="Azevedo C."/>
            <person name="Schulze-Lefert P."/>
        </authorList>
    </citation>
    <scope>NUCLEOTIDE SEQUENCE [MRNA] (ISOFORM 1)</scope>
    <scope>VARIANT ASP-329</scope>
</reference>
<reference key="2">
    <citation type="submission" date="1999-01" db="EMBL/GenBank/DDBJ databases">
        <title>Isolation and characterization the chymotrypsin-like protein gene from human heart cDNA library.</title>
        <authorList>
            <person name="Zhao Y."/>
            <person name="Cao H."/>
            <person name="Jiang Y."/>
            <person name="Meng X."/>
            <person name="Zhao X."/>
            <person name="Liu D."/>
            <person name="Ding J."/>
        </authorList>
    </citation>
    <scope>NUCLEOTIDE SEQUENCE [MRNA] (ISOFORM 2)</scope>
    <scope>VARIANT ASP-329</scope>
    <source>
        <tissue>Heart</tissue>
    </source>
</reference>
<reference key="3">
    <citation type="journal article" date="2004" name="Nat. Genet.">
        <title>Complete sequencing and characterization of 21,243 full-length human cDNAs.</title>
        <authorList>
            <person name="Ota T."/>
            <person name="Suzuki Y."/>
            <person name="Nishikawa T."/>
            <person name="Otsuki T."/>
            <person name="Sugiyama T."/>
            <person name="Irie R."/>
            <person name="Wakamatsu A."/>
            <person name="Hayashi K."/>
            <person name="Sato H."/>
            <person name="Nagai K."/>
            <person name="Kimura K."/>
            <person name="Makita H."/>
            <person name="Sekine M."/>
            <person name="Obayashi M."/>
            <person name="Nishi T."/>
            <person name="Shibahara T."/>
            <person name="Tanaka T."/>
            <person name="Ishii S."/>
            <person name="Yamamoto J."/>
            <person name="Saito K."/>
            <person name="Kawai Y."/>
            <person name="Isono Y."/>
            <person name="Nakamura Y."/>
            <person name="Nagahari K."/>
            <person name="Murakami K."/>
            <person name="Yasuda T."/>
            <person name="Iwayanagi T."/>
            <person name="Wagatsuma M."/>
            <person name="Shiratori A."/>
            <person name="Sudo H."/>
            <person name="Hosoiri T."/>
            <person name="Kaku Y."/>
            <person name="Kodaira H."/>
            <person name="Kondo H."/>
            <person name="Sugawara M."/>
            <person name="Takahashi M."/>
            <person name="Kanda K."/>
            <person name="Yokoi T."/>
            <person name="Furuya T."/>
            <person name="Kikkawa E."/>
            <person name="Omura Y."/>
            <person name="Abe K."/>
            <person name="Kamihara K."/>
            <person name="Katsuta N."/>
            <person name="Sato K."/>
            <person name="Tanikawa M."/>
            <person name="Yamazaki M."/>
            <person name="Ninomiya K."/>
            <person name="Ishibashi T."/>
            <person name="Yamashita H."/>
            <person name="Murakawa K."/>
            <person name="Fujimori K."/>
            <person name="Tanai H."/>
            <person name="Kimata M."/>
            <person name="Watanabe M."/>
            <person name="Hiraoka S."/>
            <person name="Chiba Y."/>
            <person name="Ishida S."/>
            <person name="Ono Y."/>
            <person name="Takiguchi S."/>
            <person name="Watanabe S."/>
            <person name="Yosida M."/>
            <person name="Hotuta T."/>
            <person name="Kusano J."/>
            <person name="Kanehori K."/>
            <person name="Takahashi-Fujii A."/>
            <person name="Hara H."/>
            <person name="Tanase T.-O."/>
            <person name="Nomura Y."/>
            <person name="Togiya S."/>
            <person name="Komai F."/>
            <person name="Hara R."/>
            <person name="Takeuchi K."/>
            <person name="Arita M."/>
            <person name="Imose N."/>
            <person name="Musashino K."/>
            <person name="Yuuki H."/>
            <person name="Oshima A."/>
            <person name="Sasaki N."/>
            <person name="Aotsuka S."/>
            <person name="Yoshikawa Y."/>
            <person name="Matsunawa H."/>
            <person name="Ichihara T."/>
            <person name="Shiohata N."/>
            <person name="Sano S."/>
            <person name="Moriya S."/>
            <person name="Momiyama H."/>
            <person name="Satoh N."/>
            <person name="Takami S."/>
            <person name="Terashima Y."/>
            <person name="Suzuki O."/>
            <person name="Nakagawa S."/>
            <person name="Senoh A."/>
            <person name="Mizoguchi H."/>
            <person name="Goto Y."/>
            <person name="Shimizu F."/>
            <person name="Wakebe H."/>
            <person name="Hishigaki H."/>
            <person name="Watanabe T."/>
            <person name="Sugiyama A."/>
            <person name="Takemoto M."/>
            <person name="Kawakami B."/>
            <person name="Yamazaki M."/>
            <person name="Watanabe K."/>
            <person name="Kumagai A."/>
            <person name="Itakura S."/>
            <person name="Fukuzumi Y."/>
            <person name="Fujimori Y."/>
            <person name="Komiyama M."/>
            <person name="Tashiro H."/>
            <person name="Tanigami A."/>
            <person name="Fujiwara T."/>
            <person name="Ono T."/>
            <person name="Yamada K."/>
            <person name="Fujii Y."/>
            <person name="Ozaki K."/>
            <person name="Hirao M."/>
            <person name="Ohmori Y."/>
            <person name="Kawabata A."/>
            <person name="Hikiji T."/>
            <person name="Kobatake N."/>
            <person name="Inagaki H."/>
            <person name="Ikema Y."/>
            <person name="Okamoto S."/>
            <person name="Okitani R."/>
            <person name="Kawakami T."/>
            <person name="Noguchi S."/>
            <person name="Itoh T."/>
            <person name="Shigeta K."/>
            <person name="Senba T."/>
            <person name="Matsumura K."/>
            <person name="Nakajima Y."/>
            <person name="Mizuno T."/>
            <person name="Morinaga M."/>
            <person name="Sasaki M."/>
            <person name="Togashi T."/>
            <person name="Oyama M."/>
            <person name="Hata H."/>
            <person name="Watanabe M."/>
            <person name="Komatsu T."/>
            <person name="Mizushima-Sugano J."/>
            <person name="Satoh T."/>
            <person name="Shirai Y."/>
            <person name="Takahashi Y."/>
            <person name="Nakagawa K."/>
            <person name="Okumura K."/>
            <person name="Nagase T."/>
            <person name="Nomura N."/>
            <person name="Kikuchi H."/>
            <person name="Masuho Y."/>
            <person name="Yamashita R."/>
            <person name="Nakai K."/>
            <person name="Yada T."/>
            <person name="Nakamura Y."/>
            <person name="Ohara O."/>
            <person name="Isogai T."/>
            <person name="Sugano S."/>
        </authorList>
    </citation>
    <scope>NUCLEOTIDE SEQUENCE [LARGE SCALE MRNA] (ISOFORM 1)</scope>
    <scope>VARIANT ASP-329</scope>
    <source>
        <tissue>Thalamus</tissue>
    </source>
</reference>
<reference key="4">
    <citation type="journal article" date="2006" name="Nature">
        <title>Human chromosome 11 DNA sequence and analysis including novel gene identification.</title>
        <authorList>
            <person name="Taylor T.D."/>
            <person name="Noguchi H."/>
            <person name="Totoki Y."/>
            <person name="Toyoda A."/>
            <person name="Kuroki Y."/>
            <person name="Dewar K."/>
            <person name="Lloyd C."/>
            <person name="Itoh T."/>
            <person name="Takeda T."/>
            <person name="Kim D.-W."/>
            <person name="She X."/>
            <person name="Barlow K.F."/>
            <person name="Bloom T."/>
            <person name="Bruford E."/>
            <person name="Chang J.L."/>
            <person name="Cuomo C.A."/>
            <person name="Eichler E."/>
            <person name="FitzGerald M.G."/>
            <person name="Jaffe D.B."/>
            <person name="LaButti K."/>
            <person name="Nicol R."/>
            <person name="Park H.-S."/>
            <person name="Seaman C."/>
            <person name="Sougnez C."/>
            <person name="Yang X."/>
            <person name="Zimmer A.R."/>
            <person name="Zody M.C."/>
            <person name="Birren B.W."/>
            <person name="Nusbaum C."/>
            <person name="Fujiyama A."/>
            <person name="Hattori M."/>
            <person name="Rogers J."/>
            <person name="Lander E.S."/>
            <person name="Sakaki Y."/>
        </authorList>
    </citation>
    <scope>NUCLEOTIDE SEQUENCE [LARGE SCALE GENOMIC DNA]</scope>
</reference>
<reference key="5">
    <citation type="submission" date="2005-07" db="EMBL/GenBank/DDBJ databases">
        <authorList>
            <person name="Mural R.J."/>
            <person name="Istrail S."/>
            <person name="Sutton G.G."/>
            <person name="Florea L."/>
            <person name="Halpern A.L."/>
            <person name="Mobarry C.M."/>
            <person name="Lippert R."/>
            <person name="Walenz B."/>
            <person name="Shatkay H."/>
            <person name="Dew I."/>
            <person name="Miller J.R."/>
            <person name="Flanigan M.J."/>
            <person name="Edwards N.J."/>
            <person name="Bolanos R."/>
            <person name="Fasulo D."/>
            <person name="Halldorsson B.V."/>
            <person name="Hannenhalli S."/>
            <person name="Turner R."/>
            <person name="Yooseph S."/>
            <person name="Lu F."/>
            <person name="Nusskern D.R."/>
            <person name="Shue B.C."/>
            <person name="Zheng X.H."/>
            <person name="Zhong F."/>
            <person name="Delcher A.L."/>
            <person name="Huson D.H."/>
            <person name="Kravitz S.A."/>
            <person name="Mouchard L."/>
            <person name="Reinert K."/>
            <person name="Remington K.A."/>
            <person name="Clark A.G."/>
            <person name="Waterman M.S."/>
            <person name="Eichler E.E."/>
            <person name="Adams M.D."/>
            <person name="Hunkapiller M.W."/>
            <person name="Myers E.W."/>
            <person name="Venter J.C."/>
        </authorList>
    </citation>
    <scope>NUCLEOTIDE SEQUENCE [LARGE SCALE GENOMIC DNA]</scope>
    <scope>VARIANT ASP-329</scope>
</reference>
<reference key="6">
    <citation type="journal article" date="2004" name="Genome Res.">
        <title>The status, quality, and expansion of the NIH full-length cDNA project: the Mammalian Gene Collection (MGC).</title>
        <authorList>
            <consortium name="The MGC Project Team"/>
        </authorList>
    </citation>
    <scope>NUCLEOTIDE SEQUENCE [LARGE SCALE MRNA] (ISOFORM 1)</scope>
    <source>
        <tissue>Brain</tissue>
        <tissue>Uterus</tissue>
    </source>
</reference>
<reference key="7">
    <citation type="submission" date="2010-01" db="UniProtKB">
        <authorList>
            <person name="Bienvenut W.V."/>
            <person name="Bilsland A.E."/>
            <person name="Keith W.N."/>
        </authorList>
    </citation>
    <scope>PROTEIN SEQUENCE OF 2-8; 47-61; 108-121; 249-256; 282-289; 291-299 AND 306-321</scope>
    <scope>CLEAVAGE OF INITIATOR METHIONINE</scope>
    <scope>ACETYLATION AT ALA-2</scope>
    <scope>IDENTIFICATION BY MASS SPECTROMETRY</scope>
    <source>
        <tissue>Colon carcinoma</tissue>
    </source>
</reference>
<reference key="8">
    <citation type="journal article" date="2008" name="Proc. Natl. Acad. Sci. U.S.A.">
        <title>A quantitative atlas of mitotic phosphorylation.</title>
        <authorList>
            <person name="Dephoure N."/>
            <person name="Zhou C."/>
            <person name="Villen J."/>
            <person name="Beausoleil S.A."/>
            <person name="Bakalarski C.E."/>
            <person name="Elledge S.J."/>
            <person name="Gygi S.P."/>
        </authorList>
    </citation>
    <scope>PHOSPHORYLATION [LARGE SCALE ANALYSIS] AT THR-47 AND SER-51</scope>
    <scope>IDENTIFICATION BY MASS SPECTROMETRY [LARGE SCALE ANALYSIS]</scope>
    <source>
        <tissue>Cervix carcinoma</tissue>
    </source>
</reference>
<reference key="9">
    <citation type="journal article" date="2009" name="Anal. Chem.">
        <title>Lys-N and trypsin cover complementary parts of the phosphoproteome in a refined SCX-based approach.</title>
        <authorList>
            <person name="Gauci S."/>
            <person name="Helbig A.O."/>
            <person name="Slijper M."/>
            <person name="Krijgsveld J."/>
            <person name="Heck A.J."/>
            <person name="Mohammed S."/>
        </authorList>
    </citation>
    <scope>IDENTIFICATION BY MASS SPECTROMETRY [LARGE SCALE ANALYSIS]</scope>
</reference>
<reference key="10">
    <citation type="journal article" date="2010" name="Dev. Cell">
        <title>Morgana/chp-1, a ROCK inhibitor involved in centrosome duplication and tumorigenesis.</title>
        <authorList>
            <person name="Ferretti R."/>
            <person name="Palumbo V."/>
            <person name="Di Savino A."/>
            <person name="Velasco S."/>
            <person name="Sbroggio M."/>
            <person name="Sportoletti P."/>
            <person name="Micale L."/>
            <person name="Turco E."/>
            <person name="Silengo L."/>
            <person name="Palumbo G."/>
            <person name="Hirsch E."/>
            <person name="Teruya-Feldstein J."/>
            <person name="Bonaccorsi S."/>
            <person name="Pandolfi P.P."/>
            <person name="Gatti M."/>
            <person name="Tarone G."/>
            <person name="Brancaccio M."/>
        </authorList>
    </citation>
    <scope>FUNCTION</scope>
    <scope>INTERACTION WITH ROCK1 AND ROCK2</scope>
    <scope>TISSUE SPECIFICITY</scope>
</reference>
<reference key="11">
    <citation type="journal article" date="2010" name="Mol. Cell. Proteomics">
        <title>A proteomic investigation of ligand-dependent HSP90 complexes reveals CHORDC1 as a novel ADP-dependent HSP90-interacting protein.</title>
        <authorList>
            <person name="Gano J.J."/>
            <person name="Simon J.A."/>
        </authorList>
    </citation>
    <scope>INTERACTION WITH HSP90AA1</scope>
</reference>
<reference key="12">
    <citation type="journal article" date="2010" name="Sci. Signal.">
        <title>Quantitative phosphoproteomics reveals widespread full phosphorylation site occupancy during mitosis.</title>
        <authorList>
            <person name="Olsen J.V."/>
            <person name="Vermeulen M."/>
            <person name="Santamaria A."/>
            <person name="Kumar C."/>
            <person name="Miller M.L."/>
            <person name="Jensen L.J."/>
            <person name="Gnad F."/>
            <person name="Cox J."/>
            <person name="Jensen T.S."/>
            <person name="Nigg E.A."/>
            <person name="Brunak S."/>
            <person name="Mann M."/>
        </authorList>
    </citation>
    <scope>IDENTIFICATION BY MASS SPECTROMETRY [LARGE SCALE ANALYSIS]</scope>
    <source>
        <tissue>Cervix carcinoma</tissue>
    </source>
</reference>
<reference key="13">
    <citation type="journal article" date="2011" name="BMC Syst. Biol.">
        <title>Initial characterization of the human central proteome.</title>
        <authorList>
            <person name="Burkard T.R."/>
            <person name="Planyavsky M."/>
            <person name="Kaupe I."/>
            <person name="Breitwieser F.P."/>
            <person name="Buerckstuemmer T."/>
            <person name="Bennett K.L."/>
            <person name="Superti-Furga G."/>
            <person name="Colinge J."/>
        </authorList>
    </citation>
    <scope>IDENTIFICATION BY MASS SPECTROMETRY [LARGE SCALE ANALYSIS]</scope>
</reference>
<reference key="14">
    <citation type="journal article" date="2011" name="Sci. Signal.">
        <title>System-wide temporal characterization of the proteome and phosphoproteome of human embryonic stem cell differentiation.</title>
        <authorList>
            <person name="Rigbolt K.T."/>
            <person name="Prokhorova T.A."/>
            <person name="Akimov V."/>
            <person name="Henningsen J."/>
            <person name="Johansen P.T."/>
            <person name="Kratchmarova I."/>
            <person name="Kassem M."/>
            <person name="Mann M."/>
            <person name="Olsen J.V."/>
            <person name="Blagoev B."/>
        </authorList>
    </citation>
    <scope>IDENTIFICATION BY MASS SPECTROMETRY [LARGE SCALE ANALYSIS]</scope>
</reference>
<reference key="15">
    <citation type="journal article" date="2012" name="Proc. Natl. Acad. Sci. U.S.A.">
        <title>N-terminal acetylome analyses and functional insights of the N-terminal acetyltransferase NatB.</title>
        <authorList>
            <person name="Van Damme P."/>
            <person name="Lasa M."/>
            <person name="Polevoda B."/>
            <person name="Gazquez C."/>
            <person name="Elosegui-Artola A."/>
            <person name="Kim D.S."/>
            <person name="De Juan-Pardo E."/>
            <person name="Demeyer K."/>
            <person name="Hole K."/>
            <person name="Larrea E."/>
            <person name="Timmerman E."/>
            <person name="Prieto J."/>
            <person name="Arnesen T."/>
            <person name="Sherman F."/>
            <person name="Gevaert K."/>
            <person name="Aldabe R."/>
        </authorList>
    </citation>
    <scope>ACETYLATION [LARGE SCALE ANALYSIS] AT ALA-2</scope>
    <scope>CLEAVAGE OF INITIATOR METHIONINE [LARGE SCALE ANALYSIS]</scope>
    <scope>IDENTIFICATION BY MASS SPECTROMETRY [LARGE SCALE ANALYSIS]</scope>
</reference>
<reference key="16">
    <citation type="journal article" date="2013" name="J. Proteome Res.">
        <title>Toward a comprehensive characterization of a human cancer cell phosphoproteome.</title>
        <authorList>
            <person name="Zhou H."/>
            <person name="Di Palma S."/>
            <person name="Preisinger C."/>
            <person name="Peng M."/>
            <person name="Polat A.N."/>
            <person name="Heck A.J."/>
            <person name="Mohammed S."/>
        </authorList>
    </citation>
    <scope>IDENTIFICATION BY MASS SPECTROMETRY [LARGE SCALE ANALYSIS]</scope>
    <source>
        <tissue>Erythroleukemia</tissue>
    </source>
</reference>
<reference key="17">
    <citation type="journal article" date="2020" name="Elife">
        <title>The CHORD protein CHP-1 regulates EGF receptor trafficking and signaling in C. elegans and in human cells.</title>
        <authorList>
            <person name="Haag A."/>
            <person name="Walser M."/>
            <person name="Henggeler A."/>
            <person name="Hajnal A."/>
        </authorList>
    </citation>
    <scope>FUNCTION</scope>
</reference>
<reference key="18">
    <citation type="submission" date="2008-04" db="PDB data bank">
        <title>Solution structure of the CHORD domain of human CHORD-containing protein 1.</title>
        <authorList>
            <consortium name="RIKEN structural genomics initiative (RSGI)"/>
        </authorList>
    </citation>
    <scope>STRUCTURE BY NMR OF 1-68 IN COMPLEX WITH ZINC</scope>
</reference>
<sequence>MALLCYNRGCGQRFDPETNSDDACTYHPGVPVFHDALKGWSCCKRRTTDFSDFLSIVGCTKGRHNSEKPPEPVKPEVKTTEKKELCELKPKFQEHIIQAPKPVEAIKRPSPDEPMTNLELKISASLKQALDKLKLSSGNEENKKEEDNDEIKIGTSCKNGGCSKTYQGLESLEEVCVYHSGVPIFHEGMKYWSCCRRKTSDFNTFLAQEGCTKGKHMWTKKDAGKKVVPCRHDWHQTGGEVTISVYAKNSLPELSRVEANSTLLNVHIVFEGEKEFDQNVKLWGVIDVKRSYVTMTATKIEITMRKAEPMQWASLELPAAKKQEKQKDATTD</sequence>
<protein>
    <recommendedName>
        <fullName>Cysteine and histidine-rich domain-containing protein 1</fullName>
    </recommendedName>
    <alternativeName>
        <fullName>CHORD domain-containing protein 1</fullName>
        <shortName>CHORD-containing protein 1</shortName>
        <shortName>CHP-1</shortName>
    </alternativeName>
    <alternativeName>
        <fullName>Protein morgana</fullName>
    </alternativeName>
</protein>
<organism>
    <name type="scientific">Homo sapiens</name>
    <name type="common">Human</name>
    <dbReference type="NCBI Taxonomy" id="9606"/>
    <lineage>
        <taxon>Eukaryota</taxon>
        <taxon>Metazoa</taxon>
        <taxon>Chordata</taxon>
        <taxon>Craniata</taxon>
        <taxon>Vertebrata</taxon>
        <taxon>Euteleostomi</taxon>
        <taxon>Mammalia</taxon>
        <taxon>Eutheria</taxon>
        <taxon>Euarchontoglires</taxon>
        <taxon>Primates</taxon>
        <taxon>Haplorrhini</taxon>
        <taxon>Catarrhini</taxon>
        <taxon>Hominidae</taxon>
        <taxon>Homo</taxon>
    </lineage>
</organism>
<comment type="function">
    <text evidence="6 7">Regulates centrosome duplication, probably by inhibiting the kinase activity of ROCK2 (PubMed:20230755). Proposed to act as co-chaperone for HSP90 (PubMed:20230755). May play a role in the regulation of NOD1 via a HSP90 chaperone complex (PubMed:20230755). In vitro, has intrinsic chaperone activity (PubMed:20230755). This function may be achieved by inhibiting association of ROCK2 with NPM1 (PubMed:20230755). Plays a role in ensuring the localization of the tyrosine kinase receptor EGFR to the plasma membrane, and thus ensures the subsequent regulation of EGFR activity and EGF-induced actin cytoskeleton remodeling (PubMed:32053105). Involved in stress response (PubMed:20230755). Prevents tumorigenesis (PubMed:20230755).</text>
</comment>
<comment type="subunit">
    <text evidence="1">Interacts with HSP90AA1, ROCK1 and ROCK2. Interacts with HSP90AB1 and PPP5C (By similarity).</text>
</comment>
<comment type="interaction">
    <interactant intactId="EBI-2550959">
        <id>Q9UHD1</id>
    </interactant>
    <interactant intactId="EBI-296047">
        <id>P07900</id>
        <label>HSP90AA1</label>
    </interactant>
    <organismsDiffer>false</organismsDiffer>
    <experiments>8</experiments>
</comment>
<comment type="interaction">
    <interactant intactId="EBI-2550959">
        <id>Q9UHD1</id>
    </interactant>
    <interactant intactId="EBI-352572">
        <id>P08238</id>
        <label>HSP90AB1</label>
    </interactant>
    <organismsDiffer>false</organismsDiffer>
    <experiments>6</experiments>
</comment>
<comment type="alternative products">
    <event type="alternative splicing"/>
    <isoform>
        <id>Q9UHD1-1</id>
        <name>1</name>
        <sequence type="displayed"/>
    </isoform>
    <isoform>
        <id>Q9UHD1-2</id>
        <name>2</name>
        <sequence type="described" ref="VSP_031150"/>
    </isoform>
</comment>
<comment type="tissue specificity">
    <text evidence="6">Underexpressed in many breast and lung cancers.</text>
</comment>
<comment type="sequence caution" evidence="13">
    <conflict type="erroneous initiation">
        <sequence resource="EMBL-CDS" id="AAH17789"/>
    </conflict>
    <text>Truncated N-terminus.</text>
</comment>